<feature type="transit peptide" description="Mitochondrion" evidence="1">
    <location>
        <begin position="1"/>
        <end position="27"/>
    </location>
</feature>
<feature type="chain" id="PRO_0000294360" description="Succinate dehydrogenase assembly factor 2, mitochondrial">
    <location>
        <begin position="28"/>
        <end position="164"/>
    </location>
</feature>
<organism>
    <name type="scientific">Rattus norvegicus</name>
    <name type="common">Rat</name>
    <dbReference type="NCBI Taxonomy" id="10116"/>
    <lineage>
        <taxon>Eukaryota</taxon>
        <taxon>Metazoa</taxon>
        <taxon>Chordata</taxon>
        <taxon>Craniata</taxon>
        <taxon>Vertebrata</taxon>
        <taxon>Euteleostomi</taxon>
        <taxon>Mammalia</taxon>
        <taxon>Eutheria</taxon>
        <taxon>Euarchontoglires</taxon>
        <taxon>Glires</taxon>
        <taxon>Rodentia</taxon>
        <taxon>Myomorpha</taxon>
        <taxon>Muroidea</taxon>
        <taxon>Muridae</taxon>
        <taxon>Murinae</taxon>
        <taxon>Rattus</taxon>
    </lineage>
</organism>
<keyword id="KW-0143">Chaperone</keyword>
<keyword id="KW-0496">Mitochondrion</keyword>
<keyword id="KW-1185">Reference proteome</keyword>
<keyword id="KW-0809">Transit peptide</keyword>
<evidence type="ECO:0000255" key="1"/>
<evidence type="ECO:0000255" key="2">
    <source>
        <dbReference type="HAMAP-Rule" id="MF_03057"/>
    </source>
</evidence>
<gene>
    <name evidence="2" type="primary">Sdhaf2</name>
    <name evidence="2" type="synonym">Pgl2</name>
    <name evidence="2" type="synonym">Sdh5</name>
</gene>
<comment type="function">
    <text evidence="2">Plays an essential role in the assembly of succinate dehydrogenase (SDH), an enzyme complex (also referred to as respiratory complex II) that is a component of both the tricarboxylic acid (TCA) cycle and the mitochondrial electron transport chain, and which couples the oxidation of succinate to fumarate with the reduction of ubiquinone (coenzyme Q) to ubiquinol. Required for flavinylation (covalent attachment of FAD) of the flavoprotein subunit SDHA of the SDH catalytic dimer.</text>
</comment>
<comment type="subunit">
    <text evidence="2">Interacts with SDHA within the SDH catalytic dimer.</text>
</comment>
<comment type="subcellular location">
    <subcellularLocation>
        <location evidence="2">Mitochondrion matrix</location>
    </subcellularLocation>
</comment>
<comment type="similarity">
    <text evidence="2">Belongs to the SDHAF2 family.</text>
</comment>
<proteinExistence type="evidence at transcript level"/>
<protein>
    <recommendedName>
        <fullName evidence="2">Succinate dehydrogenase assembly factor 2, mitochondrial</fullName>
        <shortName evidence="2">SDH assembly factor 2</shortName>
        <shortName evidence="2">SDHAF2</shortName>
    </recommendedName>
</protein>
<accession>Q5RJQ7</accession>
<sequence>MAVVTLIPTLARVLSKHSLLSPLLSVTSFRRFYRGDSPTDSQKDMIEIPLPPWQERTDESIETKRARLLYESRKRGMLENCILLSLFAKEYLHNMTEKQLNLYDRLINEPSNDWDIYYWATEAKPAPEIFENEVMELLREFTKNKNKEQRLRAPDLEYLFEKPR</sequence>
<reference key="1">
    <citation type="journal article" date="2004" name="Genome Res.">
        <title>The status, quality, and expansion of the NIH full-length cDNA project: the Mammalian Gene Collection (MGC).</title>
        <authorList>
            <consortium name="The MGC Project Team"/>
        </authorList>
    </citation>
    <scope>NUCLEOTIDE SEQUENCE [LARGE SCALE MRNA]</scope>
    <source>
        <tissue>Lung</tissue>
    </source>
</reference>
<dbReference type="EMBL" id="BC086542">
    <property type="protein sequence ID" value="AAH86542.1"/>
    <property type="molecule type" value="mRNA"/>
</dbReference>
<dbReference type="RefSeq" id="NP_001008372.1">
    <property type="nucleotide sequence ID" value="NM_001008371.1"/>
</dbReference>
<dbReference type="SMR" id="Q5RJQ7"/>
<dbReference type="FunCoup" id="Q5RJQ7">
    <property type="interactions" value="2329"/>
</dbReference>
<dbReference type="STRING" id="10116.ENSRNOP00000028028"/>
<dbReference type="PhosphoSitePlus" id="Q5RJQ7"/>
<dbReference type="PaxDb" id="10116-ENSRNOP00000028028"/>
<dbReference type="Ensembl" id="ENSRNOT00000028028.5">
    <property type="protein sequence ID" value="ENSRNOP00000028028.4"/>
    <property type="gene ID" value="ENSRNOG00000020646.5"/>
</dbReference>
<dbReference type="GeneID" id="361726"/>
<dbReference type="KEGG" id="rno:361726"/>
<dbReference type="UCSC" id="RGD:1309216">
    <property type="organism name" value="rat"/>
</dbReference>
<dbReference type="AGR" id="RGD:1309216"/>
<dbReference type="CTD" id="54949"/>
<dbReference type="RGD" id="1309216">
    <property type="gene designation" value="Sdhaf2"/>
</dbReference>
<dbReference type="eggNOG" id="KOG3326">
    <property type="taxonomic scope" value="Eukaryota"/>
</dbReference>
<dbReference type="GeneTree" id="ENSGT00390000001149"/>
<dbReference type="HOGENOM" id="CLU_103054_0_2_1"/>
<dbReference type="InParanoid" id="Q5RJQ7"/>
<dbReference type="PhylomeDB" id="Q5RJQ7"/>
<dbReference type="TreeFam" id="TF300175"/>
<dbReference type="Reactome" id="R-RNO-9854311">
    <property type="pathway name" value="Maturation of TCA enzymes and regulation of TCA cycle"/>
</dbReference>
<dbReference type="PRO" id="PR:Q5RJQ7"/>
<dbReference type="Proteomes" id="UP000002494">
    <property type="component" value="Chromosome 1"/>
</dbReference>
<dbReference type="Bgee" id="ENSRNOG00000020646">
    <property type="expression patterns" value="Expressed in quadriceps femoris and 20 other cell types or tissues"/>
</dbReference>
<dbReference type="GO" id="GO:0005759">
    <property type="term" value="C:mitochondrial matrix"/>
    <property type="evidence" value="ECO:0007669"/>
    <property type="project" value="UniProtKB-SubCell"/>
</dbReference>
<dbReference type="GO" id="GO:0005739">
    <property type="term" value="C:mitochondrion"/>
    <property type="evidence" value="ECO:0000250"/>
    <property type="project" value="UniProtKB"/>
</dbReference>
<dbReference type="GO" id="GO:0060070">
    <property type="term" value="P:canonical Wnt signaling pathway"/>
    <property type="evidence" value="ECO:0000266"/>
    <property type="project" value="RGD"/>
</dbReference>
<dbReference type="GO" id="GO:0001837">
    <property type="term" value="P:epithelial to mesenchymal transition"/>
    <property type="evidence" value="ECO:0000266"/>
    <property type="project" value="RGD"/>
</dbReference>
<dbReference type="GO" id="GO:0006121">
    <property type="term" value="P:mitochondrial electron transport, succinate to ubiquinone"/>
    <property type="evidence" value="ECO:0000250"/>
    <property type="project" value="UniProtKB"/>
</dbReference>
<dbReference type="GO" id="GO:0034553">
    <property type="term" value="P:mitochondrial respiratory chain complex II assembly"/>
    <property type="evidence" value="ECO:0000266"/>
    <property type="project" value="RGD"/>
</dbReference>
<dbReference type="GO" id="GO:0090090">
    <property type="term" value="P:negative regulation of canonical Wnt signaling pathway"/>
    <property type="evidence" value="ECO:0000266"/>
    <property type="project" value="RGD"/>
</dbReference>
<dbReference type="GO" id="GO:0010719">
    <property type="term" value="P:negative regulation of epithelial to mesenchymal transition"/>
    <property type="evidence" value="ECO:0000266"/>
    <property type="project" value="RGD"/>
</dbReference>
<dbReference type="GO" id="GO:0018293">
    <property type="term" value="P:protein-FAD linkage"/>
    <property type="evidence" value="ECO:0000250"/>
    <property type="project" value="UniProtKB"/>
</dbReference>
<dbReference type="GO" id="GO:0006099">
    <property type="term" value="P:tricarboxylic acid cycle"/>
    <property type="evidence" value="ECO:0000318"/>
    <property type="project" value="GO_Central"/>
</dbReference>
<dbReference type="FunFam" id="1.10.150.250:FF:000002">
    <property type="entry name" value="Succinate dehydrogenase assembly factor 2, mitochondrial"/>
    <property type="match status" value="1"/>
</dbReference>
<dbReference type="Gene3D" id="1.10.150.250">
    <property type="entry name" value="Flavinator of succinate dehydrogenase"/>
    <property type="match status" value="1"/>
</dbReference>
<dbReference type="HAMAP" id="MF_03057">
    <property type="entry name" value="SDHAF2"/>
    <property type="match status" value="1"/>
</dbReference>
<dbReference type="InterPro" id="IPR005631">
    <property type="entry name" value="SDH"/>
</dbReference>
<dbReference type="InterPro" id="IPR036714">
    <property type="entry name" value="SDH_sf"/>
</dbReference>
<dbReference type="InterPro" id="IPR028882">
    <property type="entry name" value="SDHAF2"/>
</dbReference>
<dbReference type="PANTHER" id="PTHR12469">
    <property type="entry name" value="PROTEIN EMI5 HOMOLOG, MITOCHONDRIAL"/>
    <property type="match status" value="1"/>
</dbReference>
<dbReference type="PANTHER" id="PTHR12469:SF2">
    <property type="entry name" value="SUCCINATE DEHYDROGENASE ASSEMBLY FACTOR 2, MITOCHONDRIAL"/>
    <property type="match status" value="1"/>
</dbReference>
<dbReference type="Pfam" id="PF03937">
    <property type="entry name" value="Sdh5"/>
    <property type="match status" value="1"/>
</dbReference>
<dbReference type="SUPFAM" id="SSF109910">
    <property type="entry name" value="YgfY-like"/>
    <property type="match status" value="1"/>
</dbReference>
<name>SDHF2_RAT</name>